<evidence type="ECO:0000255" key="1">
    <source>
        <dbReference type="HAMAP-Rule" id="MF_01814"/>
    </source>
</evidence>
<sequence length="198" mass="22651">MRKSKRERQRLLQETIRENPFVTDEELAEKFSVSVQTIRLDRLELSIPELRERIKHVARQSFADKVRALPLEEVIGDIIDIEPDASAISIFDVKEEHVFRRTRIARGHHLFAQANSLAVAVIHDELALTAKATIRFVRQVKAGERVVAKAKVTGKTKSGRTVVDVNSYVGQELVFSGTFEMYRSNMEKKDGDSNEYRD</sequence>
<comment type="function">
    <text evidence="1">Transcriptional factor involved in regulation of membrane lipid biosynthesis by repressing genes involved in fatty acid and phospholipid metabolism.</text>
</comment>
<comment type="similarity">
    <text evidence="1">Belongs to the FapR family.</text>
</comment>
<reference key="1">
    <citation type="journal article" date="2007" name="Proc. Natl. Acad. Sci. U.S.A.">
        <title>Genome and proteome of long-chain alkane degrading Geobacillus thermodenitrificans NG80-2 isolated from a deep-subsurface oil reservoir.</title>
        <authorList>
            <person name="Feng L."/>
            <person name="Wang W."/>
            <person name="Cheng J."/>
            <person name="Ren Y."/>
            <person name="Zhao G."/>
            <person name="Gao C."/>
            <person name="Tang Y."/>
            <person name="Liu X."/>
            <person name="Han W."/>
            <person name="Peng X."/>
            <person name="Liu R."/>
            <person name="Wang L."/>
        </authorList>
    </citation>
    <scope>NUCLEOTIDE SEQUENCE [LARGE SCALE GENOMIC DNA]</scope>
    <source>
        <strain>NG80-2</strain>
    </source>
</reference>
<accession>A4IM62</accession>
<proteinExistence type="inferred from homology"/>
<keyword id="KW-0238">DNA-binding</keyword>
<keyword id="KW-0275">Fatty acid biosynthesis</keyword>
<keyword id="KW-0276">Fatty acid metabolism</keyword>
<keyword id="KW-0444">Lipid biosynthesis</keyword>
<keyword id="KW-0443">Lipid metabolism</keyword>
<keyword id="KW-0678">Repressor</keyword>
<keyword id="KW-0804">Transcription</keyword>
<keyword id="KW-0805">Transcription regulation</keyword>
<organism>
    <name type="scientific">Geobacillus thermodenitrificans (strain NG80-2)</name>
    <dbReference type="NCBI Taxonomy" id="420246"/>
    <lineage>
        <taxon>Bacteria</taxon>
        <taxon>Bacillati</taxon>
        <taxon>Bacillota</taxon>
        <taxon>Bacilli</taxon>
        <taxon>Bacillales</taxon>
        <taxon>Anoxybacillaceae</taxon>
        <taxon>Geobacillus</taxon>
    </lineage>
</organism>
<dbReference type="EMBL" id="CP000557">
    <property type="protein sequence ID" value="ABO66416.1"/>
    <property type="molecule type" value="Genomic_DNA"/>
</dbReference>
<dbReference type="RefSeq" id="WP_008878624.1">
    <property type="nucleotide sequence ID" value="NC_009328.1"/>
</dbReference>
<dbReference type="SMR" id="A4IM62"/>
<dbReference type="GeneID" id="87621367"/>
<dbReference type="KEGG" id="gtn:GTNG_1040"/>
<dbReference type="eggNOG" id="COG1349">
    <property type="taxonomic scope" value="Bacteria"/>
</dbReference>
<dbReference type="eggNOG" id="COG2050">
    <property type="taxonomic scope" value="Bacteria"/>
</dbReference>
<dbReference type="HOGENOM" id="CLU_095708_0_0_9"/>
<dbReference type="Proteomes" id="UP000001578">
    <property type="component" value="Chromosome"/>
</dbReference>
<dbReference type="GO" id="GO:0003677">
    <property type="term" value="F:DNA binding"/>
    <property type="evidence" value="ECO:0007669"/>
    <property type="project" value="UniProtKB-KW"/>
</dbReference>
<dbReference type="GO" id="GO:0003700">
    <property type="term" value="F:DNA-binding transcription factor activity"/>
    <property type="evidence" value="ECO:0007669"/>
    <property type="project" value="UniProtKB-UniRule"/>
</dbReference>
<dbReference type="GO" id="GO:0006633">
    <property type="term" value="P:fatty acid biosynthetic process"/>
    <property type="evidence" value="ECO:0007669"/>
    <property type="project" value="UniProtKB-KW"/>
</dbReference>
<dbReference type="GO" id="GO:0045892">
    <property type="term" value="P:negative regulation of DNA-templated transcription"/>
    <property type="evidence" value="ECO:0007669"/>
    <property type="project" value="UniProtKB-UniRule"/>
</dbReference>
<dbReference type="GO" id="GO:0045717">
    <property type="term" value="P:negative regulation of fatty acid biosynthetic process"/>
    <property type="evidence" value="ECO:0007669"/>
    <property type="project" value="UniProtKB-UniRule"/>
</dbReference>
<dbReference type="CDD" id="cd03440">
    <property type="entry name" value="hot_dog"/>
    <property type="match status" value="1"/>
</dbReference>
<dbReference type="Gene3D" id="3.10.129.10">
    <property type="entry name" value="Hotdog Thioesterase"/>
    <property type="match status" value="1"/>
</dbReference>
<dbReference type="Gene3D" id="1.10.10.10">
    <property type="entry name" value="Winged helix-like DNA-binding domain superfamily/Winged helix DNA-binding domain"/>
    <property type="match status" value="1"/>
</dbReference>
<dbReference type="HAMAP" id="MF_01814">
    <property type="entry name" value="Transcrip_fact_FapR"/>
    <property type="match status" value="1"/>
</dbReference>
<dbReference type="InterPro" id="IPR001034">
    <property type="entry name" value="DeoR_HTH"/>
</dbReference>
<dbReference type="InterPro" id="IPR029069">
    <property type="entry name" value="HotDog_dom_sf"/>
</dbReference>
<dbReference type="InterPro" id="IPR017275">
    <property type="entry name" value="Transcription_factor_FapR"/>
</dbReference>
<dbReference type="InterPro" id="IPR036388">
    <property type="entry name" value="WH-like_DNA-bd_sf"/>
</dbReference>
<dbReference type="InterPro" id="IPR036390">
    <property type="entry name" value="WH_DNA-bd_sf"/>
</dbReference>
<dbReference type="NCBIfam" id="NF003359">
    <property type="entry name" value="PRK04424.1"/>
    <property type="match status" value="1"/>
</dbReference>
<dbReference type="Pfam" id="PF08220">
    <property type="entry name" value="HTH_DeoR"/>
    <property type="match status" value="1"/>
</dbReference>
<dbReference type="PIRSF" id="PIRSF037733">
    <property type="entry name" value="Transcription_factor_FapR"/>
    <property type="match status" value="1"/>
</dbReference>
<dbReference type="SUPFAM" id="SSF54637">
    <property type="entry name" value="Thioesterase/thiol ester dehydrase-isomerase"/>
    <property type="match status" value="1"/>
</dbReference>
<dbReference type="SUPFAM" id="SSF46785">
    <property type="entry name" value="Winged helix' DNA-binding domain"/>
    <property type="match status" value="1"/>
</dbReference>
<name>FAPR_GEOTN</name>
<feature type="chain" id="PRO_1000070206" description="Transcription factor FapR">
    <location>
        <begin position="1"/>
        <end position="198"/>
    </location>
</feature>
<feature type="domain" description="MaoC-like">
    <location>
        <begin position="102"/>
        <end position="168"/>
    </location>
</feature>
<protein>
    <recommendedName>
        <fullName evidence="1">Transcription factor FapR</fullName>
    </recommendedName>
    <alternativeName>
        <fullName evidence="1">Fatty acid and phospholipid biosynthesis regulator</fullName>
    </alternativeName>
</protein>
<gene>
    <name evidence="1" type="primary">fapR</name>
    <name type="ordered locus">GTNG_1040</name>
</gene>